<comment type="subcellular location">
    <subcellularLocation>
        <location evidence="1">Cytoplasm</location>
    </subcellularLocation>
</comment>
<comment type="similarity">
    <text evidence="1">Belongs to the TACO1 family. YeeN subfamily.</text>
</comment>
<proteinExistence type="inferred from homology"/>
<protein>
    <recommendedName>
        <fullName evidence="1">Probable transcriptional regulatory protein SAUSA300_0655</fullName>
    </recommendedName>
</protein>
<reference key="1">
    <citation type="journal article" date="2006" name="Lancet">
        <title>Complete genome sequence of USA300, an epidemic clone of community-acquired meticillin-resistant Staphylococcus aureus.</title>
        <authorList>
            <person name="Diep B.A."/>
            <person name="Gill S.R."/>
            <person name="Chang R.F."/>
            <person name="Phan T.H."/>
            <person name="Chen J.H."/>
            <person name="Davidson M.G."/>
            <person name="Lin F."/>
            <person name="Lin J."/>
            <person name="Carleton H.A."/>
            <person name="Mongodin E.F."/>
            <person name="Sensabaugh G.F."/>
            <person name="Perdreau-Remington F."/>
        </authorList>
    </citation>
    <scope>NUCLEOTIDE SEQUENCE [LARGE SCALE GENOMIC DNA]</scope>
    <source>
        <strain>USA300</strain>
    </source>
</reference>
<gene>
    <name type="ordered locus">SAUSA300_0655</name>
</gene>
<accession>Q2FIX0</accession>
<feature type="chain" id="PRO_0000257138" description="Probable transcriptional regulatory protein SAUSA300_0655">
    <location>
        <begin position="1"/>
        <end position="238"/>
    </location>
</feature>
<evidence type="ECO:0000255" key="1">
    <source>
        <dbReference type="HAMAP-Rule" id="MF_00918"/>
    </source>
</evidence>
<name>Y655_STAA3</name>
<dbReference type="EMBL" id="CP000255">
    <property type="protein sequence ID" value="ABD20897.1"/>
    <property type="molecule type" value="Genomic_DNA"/>
</dbReference>
<dbReference type="RefSeq" id="WP_000532966.1">
    <property type="nucleotide sequence ID" value="NZ_CP027476.1"/>
</dbReference>
<dbReference type="SMR" id="Q2FIX0"/>
<dbReference type="KEGG" id="saa:SAUSA300_0655"/>
<dbReference type="HOGENOM" id="CLU_062974_2_0_9"/>
<dbReference type="OMA" id="NFDIPDE"/>
<dbReference type="Proteomes" id="UP000001939">
    <property type="component" value="Chromosome"/>
</dbReference>
<dbReference type="GO" id="GO:0005829">
    <property type="term" value="C:cytosol"/>
    <property type="evidence" value="ECO:0007669"/>
    <property type="project" value="TreeGrafter"/>
</dbReference>
<dbReference type="GO" id="GO:0003677">
    <property type="term" value="F:DNA binding"/>
    <property type="evidence" value="ECO:0007669"/>
    <property type="project" value="UniProtKB-UniRule"/>
</dbReference>
<dbReference type="GO" id="GO:0006355">
    <property type="term" value="P:regulation of DNA-templated transcription"/>
    <property type="evidence" value="ECO:0007669"/>
    <property type="project" value="UniProtKB-UniRule"/>
</dbReference>
<dbReference type="FunFam" id="1.10.10.200:FF:000003">
    <property type="entry name" value="Probable transcriptional regulatory protein YeeN"/>
    <property type="match status" value="1"/>
</dbReference>
<dbReference type="Gene3D" id="1.10.10.200">
    <property type="match status" value="1"/>
</dbReference>
<dbReference type="Gene3D" id="3.30.70.980">
    <property type="match status" value="2"/>
</dbReference>
<dbReference type="HAMAP" id="MF_00693">
    <property type="entry name" value="Transcrip_reg_TACO1"/>
    <property type="match status" value="1"/>
</dbReference>
<dbReference type="HAMAP" id="MF_00918">
    <property type="entry name" value="Transcrip_reg_TACO1_YeeN"/>
    <property type="match status" value="1"/>
</dbReference>
<dbReference type="InterPro" id="IPR017856">
    <property type="entry name" value="Integrase-like_N"/>
</dbReference>
<dbReference type="InterPro" id="IPR048300">
    <property type="entry name" value="TACO1_YebC-like_2nd/3rd_dom"/>
</dbReference>
<dbReference type="InterPro" id="IPR049083">
    <property type="entry name" value="TACO1_YebC_N"/>
</dbReference>
<dbReference type="InterPro" id="IPR002876">
    <property type="entry name" value="Transcrip_reg_TACO1-like"/>
</dbReference>
<dbReference type="InterPro" id="IPR026564">
    <property type="entry name" value="Transcrip_reg_TACO1-like_dom3"/>
</dbReference>
<dbReference type="InterPro" id="IPR026562">
    <property type="entry name" value="Transcrip_reg_TACO1_YeeN"/>
</dbReference>
<dbReference type="InterPro" id="IPR029072">
    <property type="entry name" value="YebC-like"/>
</dbReference>
<dbReference type="NCBIfam" id="NF001030">
    <property type="entry name" value="PRK00110.1"/>
    <property type="match status" value="1"/>
</dbReference>
<dbReference type="NCBIfam" id="NF009044">
    <property type="entry name" value="PRK12378.1"/>
    <property type="match status" value="1"/>
</dbReference>
<dbReference type="NCBIfam" id="TIGR01033">
    <property type="entry name" value="YebC/PmpR family DNA-binding transcriptional regulator"/>
    <property type="match status" value="1"/>
</dbReference>
<dbReference type="PANTHER" id="PTHR12532">
    <property type="entry name" value="TRANSLATIONAL ACTIVATOR OF CYTOCHROME C OXIDASE 1"/>
    <property type="match status" value="1"/>
</dbReference>
<dbReference type="PANTHER" id="PTHR12532:SF0">
    <property type="entry name" value="TRANSLATIONAL ACTIVATOR OF CYTOCHROME C OXIDASE 1"/>
    <property type="match status" value="1"/>
</dbReference>
<dbReference type="Pfam" id="PF20772">
    <property type="entry name" value="TACO1_YebC_N"/>
    <property type="match status" value="1"/>
</dbReference>
<dbReference type="Pfam" id="PF01709">
    <property type="entry name" value="Transcrip_reg"/>
    <property type="match status" value="1"/>
</dbReference>
<dbReference type="SUPFAM" id="SSF75625">
    <property type="entry name" value="YebC-like"/>
    <property type="match status" value="1"/>
</dbReference>
<sequence>MGRKWNNIKEKKAQKDKNTSRIYAKFGKEIYVAAKSGEPNPESNQALRLVLERAKTYSVPNHIIEKAIDKAKGAGDENFDHLRYEGFGPSGSMLIVDALTNNVNRTASDVRAAFGKNGGNMGVSGSVAYMFDHVATFGIEGKSVDEILETLMEQDVDVNDVIDDNGLTIVYAEPDQFAVVQDALRAAGVEEFKVAEFEMLPQTDIELSEADQVTFEKLIDALEDLEDVQNVFHNVDLK</sequence>
<keyword id="KW-0963">Cytoplasm</keyword>
<keyword id="KW-0238">DNA-binding</keyword>
<keyword id="KW-0804">Transcription</keyword>
<keyword id="KW-0805">Transcription regulation</keyword>
<organism>
    <name type="scientific">Staphylococcus aureus (strain USA300)</name>
    <dbReference type="NCBI Taxonomy" id="367830"/>
    <lineage>
        <taxon>Bacteria</taxon>
        <taxon>Bacillati</taxon>
        <taxon>Bacillota</taxon>
        <taxon>Bacilli</taxon>
        <taxon>Bacillales</taxon>
        <taxon>Staphylococcaceae</taxon>
        <taxon>Staphylococcus</taxon>
    </lineage>
</organism>